<protein>
    <recommendedName>
        <fullName evidence="1">Protease</fullName>
        <ecNumber evidence="1">3.4.22.39</ecNumber>
    </recommendedName>
    <alternativeName>
        <fullName evidence="1">Adenain</fullName>
    </alternativeName>
    <alternativeName>
        <fullName evidence="1">Adenovirus protease</fullName>
        <shortName evidence="1">AVP</shortName>
    </alternativeName>
    <alternativeName>
        <fullName evidence="1">Adenovirus proteinase</fullName>
    </alternativeName>
    <alternativeName>
        <fullName evidence="1">Endoprotease</fullName>
    </alternativeName>
</protein>
<reference key="1">
    <citation type="journal article" date="1981" name="Nucleic Acids Res.">
        <title>The sequence of the 3' non-coding region of the hexon mRNA discloses a novel adenovirus gene.</title>
        <authorList>
            <person name="Akusjaervi G."/>
            <person name="Zabielski J."/>
            <person name="Perricaudet M."/>
            <person name="Pettersson U."/>
        </authorList>
    </citation>
    <scope>NUCLEOTIDE SEQUENCE [GENOMIC DNA]</scope>
</reference>
<reference key="2">
    <citation type="journal article" date="1980" name="FEBS Lett.">
        <title>Localization of the 3'-terminal end of the EcoRI B fragment-specific early mRNA of adenovirus type 2.</title>
        <authorList>
            <person name="Buttner W."/>
            <person name="Veres-Molnar Z."/>
        </authorList>
    </citation>
    <scope>NUCLEOTIDE SEQUENCE [GENOMIC DNA] OF 167-204</scope>
</reference>
<reference key="3">
    <citation type="journal article" date="2002" name="J. Proteome Res.">
        <title>Analysis of the adenovirus type 5 proteome by liquid chromatography and tandem mass spectrometry methods.</title>
        <authorList>
            <person name="Chelius D."/>
            <person name="Huhmer A.F."/>
            <person name="Shieh C.H."/>
            <person name="Lehmberg E."/>
            <person name="Traina J.A."/>
            <person name="Slattery T.K."/>
            <person name="Pungor E. Jr."/>
        </authorList>
    </citation>
    <scope>SUBCELLULAR LOCATION</scope>
    <source>
        <strain>Human adenovirus C serotype 5</strain>
    </source>
</reference>
<reference key="4">
    <citation type="journal article" date="2001" name="Biochemistry">
        <title>Human adenovirus proteinase: DNA binding and stimulation of proteinase activity by DNA.</title>
        <authorList>
            <person name="McGrath W.J."/>
            <person name="Baniecki M.L."/>
            <person name="Li C."/>
            <person name="McWhirter S.M."/>
            <person name="Brown M.T."/>
            <person name="Toledo D.L."/>
            <person name="Mangel W.F."/>
        </authorList>
    </citation>
    <scope>DNA-BINDING</scope>
</reference>
<reference key="5">
    <citation type="journal article" date="2001" name="Biochemistry">
        <title>Interaction of the human adenovirus proteinase with its 11-amino acid cofactor pVIc.</title>
        <authorList>
            <person name="Baniecki M.L."/>
            <person name="McGrath W.J."/>
            <person name="McWhirter S.M."/>
            <person name="Li C."/>
            <person name="Toledo D.L."/>
            <person name="Pellicena P."/>
            <person name="Barnard D.L."/>
            <person name="Thorn K.S."/>
            <person name="Mangel W.F."/>
        </authorList>
    </citation>
    <scope>INTERACTION WITH PROTEASE COFACTOR</scope>
    <scope>ACTIVITY REGULATION</scope>
</reference>
<reference key="6">
    <citation type="journal article" date="2002" name="Virology">
        <title>In the virion, the 11-amino-acid peptide cofactor pVIc is covalently linked to the adenovirus proteinase.</title>
        <authorList>
            <person name="McGrath W.J."/>
            <person name="Aherne K.S."/>
            <person name="Mangel W.F."/>
        </authorList>
    </citation>
    <scope>INTERCHAIN DISULFIDE BOND WITH PROTEASE COFACTOR</scope>
    <scope>ACTIVITY REGULATION</scope>
</reference>
<reference key="7">
    <citation type="journal article" date="2002" name="Virus Res.">
        <title>Substrate specificity of adenovirus protease.</title>
        <authorList>
            <person name="Ruzindana-Umunyana A."/>
            <person name="Imbeault L."/>
            <person name="Weber J.M."/>
        </authorList>
    </citation>
    <scope>CHARACTERIZATION</scope>
</reference>
<reference key="8">
    <citation type="journal article" date="2009" name="Virol. J.">
        <title>Genetic reconstitution of the human adenovirus type 2 temperature-sensitive 1 mutant defective in endosomal escape.</title>
        <authorList>
            <person name="Imelli N."/>
            <person name="Ruzsics Z."/>
            <person name="Puntener D."/>
            <person name="Gastaldelli M."/>
            <person name="Greber U.F."/>
        </authorList>
    </citation>
    <scope>MUTAGENESIS OF PRO-137</scope>
    <source>
        <strain>Mutant ts-1</strain>
    </source>
</reference>
<reference key="9">
    <citation type="journal article" date="2012" name="J. Biol. Chem.">
        <title>The role of capsid maturation on adenovirus priming for sequential uncoating.</title>
        <authorList>
            <person name="Perez-Berna A.J."/>
            <person name="Ortega-Esteban A."/>
            <person name="Menendez-Conejero R."/>
            <person name="Winkler D.C."/>
            <person name="Menendez M."/>
            <person name="Steven A.C."/>
            <person name="Flint S.J."/>
            <person name="de Pablo P.J."/>
            <person name="San Martin C."/>
        </authorList>
    </citation>
    <scope>FUNCTION</scope>
</reference>
<reference key="10">
    <citation type="journal article" date="2013" name="J. Biol. Chem.">
        <title>Regulation of a viral proteinase by a peptide and DNA in one-dimensional space. IV. viral proteinase slides along DNA to locate and process its substrates.</title>
        <authorList>
            <person name="Blainey P.C."/>
            <person name="Graziano V."/>
            <person name="Perez-Berna A.J."/>
            <person name="McGrath W.J."/>
            <person name="Flint S.J."/>
            <person name="San Martin C."/>
            <person name="Xie X.S."/>
            <person name="Mangel W.F."/>
        </authorList>
    </citation>
    <scope>CHARACTERIZATION</scope>
</reference>
<reference key="11">
    <citation type="journal article" date="2012" name="Viruses">
        <title>Latest insights on adenovirus structure and assembly.</title>
        <authorList>
            <person name="San Martin C."/>
        </authorList>
    </citation>
    <scope>REVIEW</scope>
</reference>
<reference key="12">
    <citation type="journal article" date="1996" name="EMBO J.">
        <title>Crystal structure of the human adenovirus proteinase with its 11 amino acid cofactor.</title>
        <authorList>
            <person name="Ding J."/>
            <person name="McGrath W.J."/>
            <person name="Sweet R.M."/>
            <person name="Mangel W.F."/>
        </authorList>
    </citation>
    <scope>X-RAY CRYSTALLOGRAPHY (2.6 ANGSTROMS) IN COMPLEX WITH PROTEASE COFACTOR</scope>
    <scope>DISULFIDE BOND</scope>
    <scope>ACTIVE SITE</scope>
    <scope>ACTIVITY REGULATION</scope>
</reference>
<accession>P03252</accession>
<keyword id="KW-0002">3D-structure</keyword>
<keyword id="KW-0068">Autocatalytic cleavage</keyword>
<keyword id="KW-1015">Disulfide bond</keyword>
<keyword id="KW-0238">DNA-binding</keyword>
<keyword id="KW-1048">Host nucleus</keyword>
<keyword id="KW-0378">Hydrolase</keyword>
<keyword id="KW-0426">Late protein</keyword>
<keyword id="KW-0645">Protease</keyword>
<keyword id="KW-1185">Reference proteome</keyword>
<keyword id="KW-0788">Thiol protease</keyword>
<keyword id="KW-0946">Virion</keyword>
<evidence type="ECO:0000255" key="1">
    <source>
        <dbReference type="HAMAP-Rule" id="MF_04059"/>
    </source>
</evidence>
<evidence type="ECO:0000269" key="2">
    <source>
    </source>
</evidence>
<evidence type="ECO:0000269" key="3">
    <source>
    </source>
</evidence>
<evidence type="ECO:0000269" key="4">
    <source>
    </source>
</evidence>
<evidence type="ECO:0000269" key="5">
    <source>
    </source>
</evidence>
<evidence type="ECO:0000269" key="6">
    <source>
    </source>
</evidence>
<evidence type="ECO:0000269" key="7">
    <source>
    </source>
</evidence>
<evidence type="ECO:0000305" key="8"/>
<evidence type="ECO:0000305" key="9">
    <source>
    </source>
</evidence>
<evidence type="ECO:0007829" key="10">
    <source>
        <dbReference type="PDB" id="4EKF"/>
    </source>
</evidence>
<evidence type="ECO:0007829" key="11">
    <source>
        <dbReference type="PDB" id="4PID"/>
    </source>
</evidence>
<evidence type="ECO:0007829" key="12">
    <source>
        <dbReference type="PDB" id="5FGY"/>
    </source>
</evidence>
<sequence length="204" mass="23087">MGSSEQELKAIVKDLGCGPYFLGTYDKRFPGFVSPHKLACAIVNTAGRETGGVHWMAFAWNPRSKTCYLFEPFGFSDQRLKQVYQFEYESLLRRSAIASSPDRCITLEKSTQSVQGPNSAACGLFCCMFLHAFANWPQTPMDHNPTMNLITGVPNSMLNSPQVQPTLRRNQEQLYSFLERHSPYFRSHSAQIRSATSFCHLKNM</sequence>
<gene>
    <name evidence="1" type="primary">L3</name>
</gene>
<name>PRO_ADE02</name>
<proteinExistence type="evidence at protein level"/>
<organismHost>
    <name type="scientific">Homo sapiens</name>
    <name type="common">Human</name>
    <dbReference type="NCBI Taxonomy" id="9606"/>
</organismHost>
<dbReference type="EC" id="3.4.22.39" evidence="1"/>
<dbReference type="EMBL" id="J01917">
    <property type="protein sequence ID" value="AAA92216.1"/>
    <property type="molecule type" value="Genomic_DNA"/>
</dbReference>
<dbReference type="PIR" id="A03823">
    <property type="entry name" value="W2AD35"/>
</dbReference>
<dbReference type="RefSeq" id="AP_000176.1">
    <property type="nucleotide sequence ID" value="AC_000007.1"/>
</dbReference>
<dbReference type="RefSeq" id="NP_040526.1">
    <property type="nucleotide sequence ID" value="NC_001405.1"/>
</dbReference>
<dbReference type="PDB" id="1AVP">
    <property type="method" value="X-ray"/>
    <property type="resolution" value="2.60 A"/>
    <property type="chains" value="A=1-204"/>
</dbReference>
<dbReference type="PDB" id="1NLN">
    <property type="method" value="X-ray"/>
    <property type="resolution" value="1.60 A"/>
    <property type="chains" value="A=1-204"/>
</dbReference>
<dbReference type="PDB" id="4EKF">
    <property type="method" value="X-ray"/>
    <property type="resolution" value="0.98 A"/>
    <property type="chains" value="A=1-204"/>
</dbReference>
<dbReference type="PDB" id="4PID">
    <property type="method" value="X-ray"/>
    <property type="resolution" value="1.59 A"/>
    <property type="chains" value="A=1-204"/>
</dbReference>
<dbReference type="PDB" id="4PIE">
    <property type="method" value="X-ray"/>
    <property type="resolution" value="1.94 A"/>
    <property type="chains" value="A=1-204"/>
</dbReference>
<dbReference type="PDB" id="5FGY">
    <property type="method" value="X-ray"/>
    <property type="resolution" value="2.10 A"/>
    <property type="chains" value="A=1-204"/>
</dbReference>
<dbReference type="PDBsum" id="1AVP"/>
<dbReference type="PDBsum" id="1NLN"/>
<dbReference type="PDBsum" id="4EKF"/>
<dbReference type="PDBsum" id="4PID"/>
<dbReference type="PDBsum" id="4PIE"/>
<dbReference type="PDBsum" id="5FGY"/>
<dbReference type="SMR" id="P03252"/>
<dbReference type="MEROPS" id="C05.001"/>
<dbReference type="GeneID" id="2652998"/>
<dbReference type="EvolutionaryTrace" id="P03252"/>
<dbReference type="Proteomes" id="UP000008167">
    <property type="component" value="Segment"/>
</dbReference>
<dbReference type="GO" id="GO:0042025">
    <property type="term" value="C:host cell nucleus"/>
    <property type="evidence" value="ECO:0007669"/>
    <property type="project" value="UniProtKB-SubCell"/>
</dbReference>
<dbReference type="GO" id="GO:0044423">
    <property type="term" value="C:virion component"/>
    <property type="evidence" value="ECO:0007669"/>
    <property type="project" value="UniProtKB-UniRule"/>
</dbReference>
<dbReference type="GO" id="GO:0004197">
    <property type="term" value="F:cysteine-type endopeptidase activity"/>
    <property type="evidence" value="ECO:0007669"/>
    <property type="project" value="UniProtKB-UniRule"/>
</dbReference>
<dbReference type="GO" id="GO:0008234">
    <property type="term" value="F:cysteine-type peptidase activity"/>
    <property type="evidence" value="ECO:0000314"/>
    <property type="project" value="CACAO"/>
</dbReference>
<dbReference type="GO" id="GO:0003677">
    <property type="term" value="F:DNA binding"/>
    <property type="evidence" value="ECO:0007669"/>
    <property type="project" value="UniProtKB-UniRule"/>
</dbReference>
<dbReference type="GO" id="GO:0006508">
    <property type="term" value="P:proteolysis"/>
    <property type="evidence" value="ECO:0007669"/>
    <property type="project" value="UniProtKB-KW"/>
</dbReference>
<dbReference type="Gene3D" id="3.40.395.10">
    <property type="entry name" value="Adenoviral Proteinase, Chain A"/>
    <property type="match status" value="1"/>
</dbReference>
<dbReference type="HAMAP" id="MF_04059">
    <property type="entry name" value="ADV_PRO"/>
    <property type="match status" value="1"/>
</dbReference>
<dbReference type="InterPro" id="IPR038765">
    <property type="entry name" value="Papain-like_cys_pep_sf"/>
</dbReference>
<dbReference type="InterPro" id="IPR000855">
    <property type="entry name" value="Peptidase_C5"/>
</dbReference>
<dbReference type="Pfam" id="PF00770">
    <property type="entry name" value="Peptidase_C5"/>
    <property type="match status" value="1"/>
</dbReference>
<dbReference type="PIRSF" id="PIRSF001218">
    <property type="entry name" value="Protease_ADV"/>
    <property type="match status" value="1"/>
</dbReference>
<dbReference type="PRINTS" id="PR00703">
    <property type="entry name" value="ADVENDOPTASE"/>
</dbReference>
<dbReference type="SUPFAM" id="SSF54001">
    <property type="entry name" value="Cysteine proteinases"/>
    <property type="match status" value="1"/>
</dbReference>
<organism>
    <name type="scientific">Human adenovirus C serotype 2</name>
    <name type="common">HAdV-2</name>
    <name type="synonym">Human adenovirus 2</name>
    <dbReference type="NCBI Taxonomy" id="10515"/>
    <lineage>
        <taxon>Viruses</taxon>
        <taxon>Varidnaviria</taxon>
        <taxon>Bamfordvirae</taxon>
        <taxon>Preplasmiviricota</taxon>
        <taxon>Tectiliviricetes</taxon>
        <taxon>Rowavirales</taxon>
        <taxon>Adenoviridae</taxon>
        <taxon>Mastadenovirus</taxon>
        <taxon>Human mastadenovirus C</taxon>
    </lineage>
</organism>
<comment type="function">
    <text evidence="1 6">Cleaves viral precursor proteins (pTP, pIIIa, pVI, pVII, pVIII, and pX) inside newly assembled particles giving rise to mature virions. Protease complexed to its cofactor slides along the viral DNA to specifically locate and cleave the viral precursors. Mature virions have a weakened organization compared to the unmature virions, thereby facilitating subsequent uncoating. Without maturation, the particle lacks infectivity and is unable to uncoat. Late in adenovirus infection, in the cytoplasm, may participate in the cytoskeleton destruction. Cleaves host cell cytoskeletal keratins K7 and K18.</text>
</comment>
<comment type="catalytic activity">
    <reaction evidence="1">
        <text>Cleaves proteins of the adenovirus and its host cell at two consensus sites: -Yaa-Xaa-Gly-Gly-|-Xaa- and -Yaa-Xaa-Gly-Xaa-|-Gly- (in which Yaa is Met, Ile or Leu, and Xaa is any amino acid).</text>
        <dbReference type="EC" id="3.4.22.39"/>
    </reaction>
</comment>
<comment type="activity regulation">
    <text evidence="1 2 3 7">Requires DNA and protease cofactor for maximal activation. Inside nascent virions, becomes partially activated by binding to the viral DNA, allowing it to cleave the cofactor that binds to the protease and fully activates it. Actin, like the viral protease cofactor, seems to act as a cofactor in the cleavage of cytokeratin 18 and of actin itself.</text>
</comment>
<comment type="subunit">
    <text evidence="1 2 7">Interacts with protease cofactor pVI-C; this interaction is necessary for protease activation.</text>
</comment>
<comment type="subcellular location">
    <subcellularLocation>
        <location evidence="1 4">Virion</location>
    </subcellularLocation>
    <subcellularLocation>
        <location evidence="1 9">Host nucleus</location>
    </subcellularLocation>
    <text evidence="1">Present in about 10 copies per virion.</text>
</comment>
<comment type="induction">
    <text evidence="1">Expressed in the late phase of the viral replicative cycle.</text>
</comment>
<comment type="miscellaneous">
    <text evidence="1">All late proteins expressed from the major late promoter are produced by alternative splicing and alternative polyadenylation of the same gene giving rise to non-overlapping ORFs. A leader sequence is present in the N-terminus of all these mRNAs and is recognized by the viral shutoff protein to provide expression although conventional translation via ribosome scanning from the cap has been shut off in the host cell.</text>
</comment>
<comment type="similarity">
    <text evidence="1 8">Belongs to the peptidase C5 family.</text>
</comment>
<feature type="chain" id="PRO_0000218023" description="Protease">
    <location>
        <begin position="1"/>
        <end position="204"/>
    </location>
</feature>
<feature type="active site" evidence="1 7">
    <location>
        <position position="54"/>
    </location>
</feature>
<feature type="active site" evidence="1 7">
    <location>
        <position position="71"/>
    </location>
</feature>
<feature type="active site" evidence="1 7">
    <location>
        <position position="122"/>
    </location>
</feature>
<feature type="site" description="Cleavage; by autolysis" evidence="1">
    <location>
        <begin position="51"/>
        <end position="52"/>
    </location>
</feature>
<feature type="disulfide bond" description="Interchain (with C-10 in cleaved protease cofactor pVI-C)" evidence="1 7">
    <location>
        <position position="104"/>
    </location>
</feature>
<feature type="mutagenesis site" description="Loss of activity; gives rise to unprocessed capsids defective in endosomal escape." evidence="5">
    <original>P</original>
    <variation>L</variation>
    <location>
        <position position="137"/>
    </location>
</feature>
<feature type="helix" evidence="10">
    <location>
        <begin position="5"/>
        <end position="14"/>
    </location>
</feature>
<feature type="helix" evidence="10">
    <location>
        <begin position="18"/>
        <end position="20"/>
    </location>
</feature>
<feature type="strand" evidence="10">
    <location>
        <begin position="21"/>
        <end position="28"/>
    </location>
</feature>
<feature type="strand" evidence="12">
    <location>
        <begin position="35"/>
        <end position="37"/>
    </location>
</feature>
<feature type="strand" evidence="10">
    <location>
        <begin position="39"/>
        <end position="45"/>
    </location>
</feature>
<feature type="helix" evidence="11">
    <location>
        <begin position="48"/>
        <end position="50"/>
    </location>
</feature>
<feature type="strand" evidence="10">
    <location>
        <begin position="55"/>
        <end position="61"/>
    </location>
</feature>
<feature type="turn" evidence="10">
    <location>
        <begin position="62"/>
        <end position="65"/>
    </location>
</feature>
<feature type="strand" evidence="10">
    <location>
        <begin position="66"/>
        <end position="70"/>
    </location>
</feature>
<feature type="helix" evidence="10">
    <location>
        <begin position="78"/>
        <end position="95"/>
    </location>
</feature>
<feature type="strand" evidence="10">
    <location>
        <begin position="106"/>
        <end position="109"/>
    </location>
</feature>
<feature type="helix" evidence="10">
    <location>
        <begin position="122"/>
        <end position="135"/>
    </location>
</feature>
<feature type="strand" evidence="10">
    <location>
        <begin position="141"/>
        <end position="144"/>
    </location>
</feature>
<feature type="helix" evidence="10">
    <location>
        <begin position="147"/>
        <end position="149"/>
    </location>
</feature>
<feature type="helix" evidence="10">
    <location>
        <begin position="155"/>
        <end position="157"/>
    </location>
</feature>
<feature type="helix" evidence="10">
    <location>
        <begin position="161"/>
        <end position="163"/>
    </location>
</feature>
<feature type="helix" evidence="10">
    <location>
        <begin position="164"/>
        <end position="181"/>
    </location>
</feature>
<feature type="helix" evidence="10">
    <location>
        <begin position="183"/>
        <end position="187"/>
    </location>
</feature>
<feature type="helix" evidence="10">
    <location>
        <begin position="189"/>
        <end position="195"/>
    </location>
</feature>
<feature type="turn" evidence="10">
    <location>
        <begin position="198"/>
        <end position="201"/>
    </location>
</feature>